<reference key="1">
    <citation type="journal article" date="2007" name="ISME J.">
        <title>Population level functional diversity in a microbial community revealed by comparative genomic and metagenomic analyses.</title>
        <authorList>
            <person name="Bhaya D."/>
            <person name="Grossman A.R."/>
            <person name="Steunou A.-S."/>
            <person name="Khuri N."/>
            <person name="Cohan F.M."/>
            <person name="Hamamura N."/>
            <person name="Melendrez M.C."/>
            <person name="Bateson M.M."/>
            <person name="Ward D.M."/>
            <person name="Heidelberg J.F."/>
        </authorList>
    </citation>
    <scope>NUCLEOTIDE SEQUENCE [LARGE SCALE GENOMIC DNA]</scope>
    <source>
        <strain>JA-2-3B'a(2-13)</strain>
    </source>
</reference>
<organism>
    <name type="scientific">Synechococcus sp. (strain JA-2-3B'a(2-13))</name>
    <name type="common">Cyanobacteria bacterium Yellowstone B-Prime</name>
    <dbReference type="NCBI Taxonomy" id="321332"/>
    <lineage>
        <taxon>Bacteria</taxon>
        <taxon>Bacillati</taxon>
        <taxon>Cyanobacteriota</taxon>
        <taxon>Cyanophyceae</taxon>
        <taxon>Synechococcales</taxon>
        <taxon>Synechococcaceae</taxon>
        <taxon>Synechococcus</taxon>
    </lineage>
</organism>
<proteinExistence type="inferred from homology"/>
<comment type="function">
    <text evidence="1">One of the extrinsic, lumenal subunits of photosystem II (PSII). PSII is a light-driven water plastoquinone oxidoreductase, using light energy to abstract electrons from H(2)O, generating a proton gradient subsequently used for ATP formation. The extrinsic proteins stabilize the structure of photosystem II oxygen-evolving complex (OEC), the ion environment of oxygen evolution and protect the OEC against heat-induced inactivation.</text>
</comment>
<comment type="subunit">
    <text evidence="1">PSII is composed of 1 copy each of membrane proteins PsbA, PsbB, PsbC, PsbD, PsbE, PsbF, PsbH, PsbI, PsbJ, PsbK, PsbL, PsbM, PsbT, PsbX, PsbY, PsbZ, Psb30/Ycf12, peripheral proteins PsbO, CyanoQ (PsbQ), PsbU, PsbV and a large number of cofactors. It forms dimeric complexes.</text>
</comment>
<comment type="subcellular location">
    <subcellularLocation>
        <location evidence="1">Cellular thylakoid membrane</location>
        <topology evidence="1">Peripheral membrane protein</topology>
        <orientation evidence="1">Lumenal side</orientation>
    </subcellularLocation>
</comment>
<comment type="similarity">
    <text evidence="1">Belongs to the PsbU family.</text>
</comment>
<comment type="sequence caution" evidence="2">
    <conflict type="erroneous initiation">
        <sequence resource="EMBL-CDS" id="ABD01137"/>
    </conflict>
    <text>Extended N-terminus.</text>
</comment>
<evidence type="ECO:0000255" key="1">
    <source>
        <dbReference type="HAMAP-Rule" id="MF_00589"/>
    </source>
</evidence>
<evidence type="ECO:0000305" key="2"/>
<dbReference type="EMBL" id="CP000240">
    <property type="protein sequence ID" value="ABD01137.1"/>
    <property type="status" value="ALT_INIT"/>
    <property type="molecule type" value="Genomic_DNA"/>
</dbReference>
<dbReference type="SMR" id="Q2JPY4"/>
<dbReference type="STRING" id="321332.CYB_0136"/>
<dbReference type="KEGG" id="cyb:CYB_0136"/>
<dbReference type="eggNOG" id="COG1555">
    <property type="taxonomic scope" value="Bacteria"/>
</dbReference>
<dbReference type="HOGENOM" id="CLU_141240_1_0_3"/>
<dbReference type="OrthoDB" id="463369at2"/>
<dbReference type="Proteomes" id="UP000001938">
    <property type="component" value="Chromosome"/>
</dbReference>
<dbReference type="GO" id="GO:0019898">
    <property type="term" value="C:extrinsic component of membrane"/>
    <property type="evidence" value="ECO:0007669"/>
    <property type="project" value="InterPro"/>
</dbReference>
<dbReference type="GO" id="GO:0009654">
    <property type="term" value="C:photosystem II oxygen evolving complex"/>
    <property type="evidence" value="ECO:0007669"/>
    <property type="project" value="InterPro"/>
</dbReference>
<dbReference type="GO" id="GO:0031676">
    <property type="term" value="C:plasma membrane-derived thylakoid membrane"/>
    <property type="evidence" value="ECO:0007669"/>
    <property type="project" value="UniProtKB-SubCell"/>
</dbReference>
<dbReference type="GO" id="GO:0015979">
    <property type="term" value="P:photosynthesis"/>
    <property type="evidence" value="ECO:0007669"/>
    <property type="project" value="UniProtKB-UniRule"/>
</dbReference>
<dbReference type="GO" id="GO:0042549">
    <property type="term" value="P:photosystem II stabilization"/>
    <property type="evidence" value="ECO:0007669"/>
    <property type="project" value="InterPro"/>
</dbReference>
<dbReference type="Gene3D" id="1.10.150.320">
    <property type="entry name" value="Photosystem II 12 kDa extrinsic protein"/>
    <property type="match status" value="1"/>
</dbReference>
<dbReference type="HAMAP" id="MF_00589">
    <property type="entry name" value="PSII_PsbU"/>
    <property type="match status" value="1"/>
</dbReference>
<dbReference type="InterPro" id="IPR010527">
    <property type="entry name" value="PSII_PsbU"/>
</dbReference>
<dbReference type="NCBIfam" id="NF002708">
    <property type="entry name" value="PRK02515.1"/>
    <property type="match status" value="1"/>
</dbReference>
<dbReference type="Pfam" id="PF06514">
    <property type="entry name" value="PsbU"/>
    <property type="match status" value="1"/>
</dbReference>
<dbReference type="SUPFAM" id="SSF81585">
    <property type="entry name" value="PsbU/PolX domain-like"/>
    <property type="match status" value="1"/>
</dbReference>
<sequence>MRWLLSILVRVVLVLCLCFAPLGIPVVARAAELPPVKHLDTPIDVNNTILRNYRQLPGFYPTLARILVKNAPYKSLEDMLQISGLTEQQKALIKANAENFVFGEYQEGANQLENRINQGYYG</sequence>
<accession>Q2JPY4</accession>
<name>PSBU_SYNJB</name>
<protein>
    <recommendedName>
        <fullName evidence="1">Photosystem II extrinsic protein U</fullName>
        <shortName evidence="1">PSII-U</shortName>
        <shortName evidence="1">PsbU</shortName>
    </recommendedName>
    <alternativeName>
        <fullName evidence="1">Photosystem II 12 kDa extrinsic protein</fullName>
        <shortName evidence="1">PS II complex 12 kDa extrinsic protein</shortName>
    </alternativeName>
</protein>
<feature type="signal peptide" evidence="1">
    <location>
        <begin position="1"/>
        <end position="30"/>
    </location>
</feature>
<feature type="chain" id="PRO_0000295787" description="Photosystem II extrinsic protein U">
    <location>
        <begin position="31"/>
        <end position="122"/>
    </location>
</feature>
<gene>
    <name evidence="1" type="primary">psbU</name>
    <name type="ordered locus">CYB_0136</name>
</gene>
<keyword id="KW-0249">Electron transport</keyword>
<keyword id="KW-0472">Membrane</keyword>
<keyword id="KW-0602">Photosynthesis</keyword>
<keyword id="KW-0604">Photosystem II</keyword>
<keyword id="KW-1185">Reference proteome</keyword>
<keyword id="KW-0732">Signal</keyword>
<keyword id="KW-0793">Thylakoid</keyword>
<keyword id="KW-0813">Transport</keyword>